<protein>
    <recommendedName>
        <fullName evidence="1">ATP phosphoribosyltransferase regulatory subunit</fullName>
    </recommendedName>
</protein>
<evidence type="ECO:0000255" key="1">
    <source>
        <dbReference type="HAMAP-Rule" id="MF_00125"/>
    </source>
</evidence>
<gene>
    <name evidence="1" type="primary">hisZ</name>
    <name type="ordered locus">Gmet_3259</name>
</gene>
<accession>Q39QK2</accession>
<sequence length="434" mass="48054">MTNPAPIEAPLPKGVTDFLPEKADKIGYIEGKIRRVFELWGFRRIITPLLEFQDVMAAGLGEDLKERTFRFDDRQTGKLLAIPSDITPQVARIVATRMRGCPLPHRLYYIGRVLRHVELQSGRSRETFQAGVELIGLDSPEADAEMVAMAVEILKGLGFEEFKVDLGHTGFIRGVMAASGLGGDARRRLQEAVGKKDSSAVRAILETEPVADRIKEELAALPRLFGGREVLAEAARVATSDSSRRALDNIAQVLDILDIHGVSDHLTLDLGEIRGLDYHSGLTFEGFVTGIGEAVCSGGRYDNLTQRYGYPAPATGFAFNILALLNALEKRPDVEASKTRDLLIFNLKDDRREALEIAQHLRALGYSTARDIIHRDFNDSLDYARRMNILRMMVIGGDYCAADEAYVVRVADKRGTAVKKADLMRNDFSLNTLP</sequence>
<comment type="function">
    <text evidence="1">Required for the first step of histidine biosynthesis. May allow the feedback regulation of ATP phosphoribosyltransferase activity by histidine.</text>
</comment>
<comment type="pathway">
    <text evidence="1">Amino-acid biosynthesis; L-histidine biosynthesis; L-histidine from 5-phospho-alpha-D-ribose 1-diphosphate: step 1/9.</text>
</comment>
<comment type="subunit">
    <text evidence="1">Heteromultimer composed of HisG and HisZ subunits.</text>
</comment>
<comment type="subcellular location">
    <subcellularLocation>
        <location evidence="1">Cytoplasm</location>
    </subcellularLocation>
</comment>
<comment type="miscellaneous">
    <text>This function is generally fulfilled by the C-terminal part of HisG, which is missing in some bacteria such as this one.</text>
</comment>
<comment type="similarity">
    <text evidence="1">Belongs to the class-II aminoacyl-tRNA synthetase family. HisZ subfamily.</text>
</comment>
<proteinExistence type="inferred from homology"/>
<dbReference type="EMBL" id="CP000148">
    <property type="protein sequence ID" value="ABB33472.1"/>
    <property type="molecule type" value="Genomic_DNA"/>
</dbReference>
<dbReference type="RefSeq" id="WP_011366168.1">
    <property type="nucleotide sequence ID" value="NC_007517.1"/>
</dbReference>
<dbReference type="SMR" id="Q39QK2"/>
<dbReference type="STRING" id="269799.Gmet_3259"/>
<dbReference type="DNASU" id="3741278"/>
<dbReference type="KEGG" id="gme:Gmet_3259"/>
<dbReference type="eggNOG" id="COG0124">
    <property type="taxonomic scope" value="Bacteria"/>
</dbReference>
<dbReference type="HOGENOM" id="CLU_025113_0_2_7"/>
<dbReference type="UniPathway" id="UPA00031">
    <property type="reaction ID" value="UER00006"/>
</dbReference>
<dbReference type="Proteomes" id="UP000007073">
    <property type="component" value="Chromosome"/>
</dbReference>
<dbReference type="GO" id="GO:0005737">
    <property type="term" value="C:cytoplasm"/>
    <property type="evidence" value="ECO:0007669"/>
    <property type="project" value="UniProtKB-SubCell"/>
</dbReference>
<dbReference type="GO" id="GO:0000105">
    <property type="term" value="P:L-histidine biosynthetic process"/>
    <property type="evidence" value="ECO:0007669"/>
    <property type="project" value="UniProtKB-UniRule"/>
</dbReference>
<dbReference type="CDD" id="cd00773">
    <property type="entry name" value="HisRS-like_core"/>
    <property type="match status" value="1"/>
</dbReference>
<dbReference type="Gene3D" id="3.30.930.10">
    <property type="entry name" value="Bira Bifunctional Protein, Domain 2"/>
    <property type="match status" value="1"/>
</dbReference>
<dbReference type="HAMAP" id="MF_00125">
    <property type="entry name" value="HisZ"/>
    <property type="match status" value="1"/>
</dbReference>
<dbReference type="InterPro" id="IPR006195">
    <property type="entry name" value="aa-tRNA-synth_II"/>
</dbReference>
<dbReference type="InterPro" id="IPR045864">
    <property type="entry name" value="aa-tRNA-synth_II/BPL/LPL"/>
</dbReference>
<dbReference type="InterPro" id="IPR041715">
    <property type="entry name" value="HisRS-like_core"/>
</dbReference>
<dbReference type="InterPro" id="IPR004516">
    <property type="entry name" value="HisRS/HisZ"/>
</dbReference>
<dbReference type="InterPro" id="IPR004517">
    <property type="entry name" value="HisZ"/>
</dbReference>
<dbReference type="NCBIfam" id="TIGR00443">
    <property type="entry name" value="hisZ_biosyn_reg"/>
    <property type="match status" value="1"/>
</dbReference>
<dbReference type="NCBIfam" id="NF008942">
    <property type="entry name" value="PRK12292.2-5"/>
    <property type="match status" value="1"/>
</dbReference>
<dbReference type="PANTHER" id="PTHR11476:SF7">
    <property type="entry name" value="HISTIDINE--TRNA LIGASE"/>
    <property type="match status" value="1"/>
</dbReference>
<dbReference type="PANTHER" id="PTHR11476">
    <property type="entry name" value="HISTIDYL-TRNA SYNTHETASE"/>
    <property type="match status" value="1"/>
</dbReference>
<dbReference type="Pfam" id="PF13393">
    <property type="entry name" value="tRNA-synt_His"/>
    <property type="match status" value="1"/>
</dbReference>
<dbReference type="PIRSF" id="PIRSF001549">
    <property type="entry name" value="His-tRNA_synth"/>
    <property type="match status" value="1"/>
</dbReference>
<dbReference type="SUPFAM" id="SSF52954">
    <property type="entry name" value="Class II aaRS ABD-related"/>
    <property type="match status" value="1"/>
</dbReference>
<dbReference type="SUPFAM" id="SSF55681">
    <property type="entry name" value="Class II aaRS and biotin synthetases"/>
    <property type="match status" value="1"/>
</dbReference>
<dbReference type="PROSITE" id="PS50862">
    <property type="entry name" value="AA_TRNA_LIGASE_II"/>
    <property type="match status" value="1"/>
</dbReference>
<feature type="chain" id="PRO_0000242836" description="ATP phosphoribosyltransferase regulatory subunit">
    <location>
        <begin position="1"/>
        <end position="434"/>
    </location>
</feature>
<organism>
    <name type="scientific">Geobacter metallireducens (strain ATCC 53774 / DSM 7210 / GS-15)</name>
    <dbReference type="NCBI Taxonomy" id="269799"/>
    <lineage>
        <taxon>Bacteria</taxon>
        <taxon>Pseudomonadati</taxon>
        <taxon>Thermodesulfobacteriota</taxon>
        <taxon>Desulfuromonadia</taxon>
        <taxon>Geobacterales</taxon>
        <taxon>Geobacteraceae</taxon>
        <taxon>Geobacter</taxon>
    </lineage>
</organism>
<reference key="1">
    <citation type="journal article" date="2009" name="BMC Microbiol.">
        <title>The genome sequence of Geobacter metallireducens: features of metabolism, physiology and regulation common and dissimilar to Geobacter sulfurreducens.</title>
        <authorList>
            <person name="Aklujkar M."/>
            <person name="Krushkal J."/>
            <person name="DiBartolo G."/>
            <person name="Lapidus A."/>
            <person name="Land M.L."/>
            <person name="Lovley D.R."/>
        </authorList>
    </citation>
    <scope>NUCLEOTIDE SEQUENCE [LARGE SCALE GENOMIC DNA]</scope>
    <source>
        <strain>ATCC 53774 / DSM 7210 / GS-15</strain>
    </source>
</reference>
<name>HISZ_GEOMG</name>
<keyword id="KW-0028">Amino-acid biosynthesis</keyword>
<keyword id="KW-0963">Cytoplasm</keyword>
<keyword id="KW-0368">Histidine biosynthesis</keyword>
<keyword id="KW-1185">Reference proteome</keyword>